<organism>
    <name type="scientific">Marinobacter nauticus (strain ATCC 700491 / DSM 11845 / VT8)</name>
    <name type="common">Marinobacter aquaeolei</name>
    <dbReference type="NCBI Taxonomy" id="351348"/>
    <lineage>
        <taxon>Bacteria</taxon>
        <taxon>Pseudomonadati</taxon>
        <taxon>Pseudomonadota</taxon>
        <taxon>Gammaproteobacteria</taxon>
        <taxon>Pseudomonadales</taxon>
        <taxon>Marinobacteraceae</taxon>
        <taxon>Marinobacter</taxon>
    </lineage>
</organism>
<proteinExistence type="inferred from homology"/>
<reference key="1">
    <citation type="journal article" date="2011" name="Appl. Environ. Microbiol.">
        <title>Genomic potential of Marinobacter aquaeolei, a biogeochemical 'opportunitroph'.</title>
        <authorList>
            <person name="Singer E."/>
            <person name="Webb E.A."/>
            <person name="Nelson W.C."/>
            <person name="Heidelberg J.F."/>
            <person name="Ivanova N."/>
            <person name="Pati A."/>
            <person name="Edwards K.J."/>
        </authorList>
    </citation>
    <scope>NUCLEOTIDE SEQUENCE [LARGE SCALE GENOMIC DNA]</scope>
    <source>
        <strain>ATCC 700491 / DSM 11845 / VT8</strain>
    </source>
</reference>
<evidence type="ECO:0000255" key="1">
    <source>
        <dbReference type="HAMAP-Rule" id="MF_00041"/>
    </source>
</evidence>
<accession>A1U1Q7</accession>
<feature type="chain" id="PRO_0000332849" description="Cysteine--tRNA ligase">
    <location>
        <begin position="1"/>
        <end position="463"/>
    </location>
</feature>
<feature type="short sequence motif" description="'HIGH' region">
    <location>
        <begin position="29"/>
        <end position="39"/>
    </location>
</feature>
<feature type="short sequence motif" description="'KMSKS' region">
    <location>
        <begin position="265"/>
        <end position="269"/>
    </location>
</feature>
<feature type="binding site" evidence="1">
    <location>
        <position position="27"/>
    </location>
    <ligand>
        <name>Zn(2+)</name>
        <dbReference type="ChEBI" id="CHEBI:29105"/>
    </ligand>
</feature>
<feature type="binding site" evidence="1">
    <location>
        <position position="208"/>
    </location>
    <ligand>
        <name>Zn(2+)</name>
        <dbReference type="ChEBI" id="CHEBI:29105"/>
    </ligand>
</feature>
<feature type="binding site" evidence="1">
    <location>
        <position position="233"/>
    </location>
    <ligand>
        <name>Zn(2+)</name>
        <dbReference type="ChEBI" id="CHEBI:29105"/>
    </ligand>
</feature>
<feature type="binding site" evidence="1">
    <location>
        <position position="237"/>
    </location>
    <ligand>
        <name>Zn(2+)</name>
        <dbReference type="ChEBI" id="CHEBI:29105"/>
    </ligand>
</feature>
<feature type="binding site" evidence="1">
    <location>
        <position position="268"/>
    </location>
    <ligand>
        <name>ATP</name>
        <dbReference type="ChEBI" id="CHEBI:30616"/>
    </ligand>
</feature>
<dbReference type="EC" id="6.1.1.16" evidence="1"/>
<dbReference type="EMBL" id="CP000514">
    <property type="protein sequence ID" value="ABM18926.1"/>
    <property type="molecule type" value="Genomic_DNA"/>
</dbReference>
<dbReference type="RefSeq" id="WP_011785322.1">
    <property type="nucleotide sequence ID" value="NC_008740.1"/>
</dbReference>
<dbReference type="SMR" id="A1U1Q7"/>
<dbReference type="STRING" id="351348.Maqu_1844"/>
<dbReference type="KEGG" id="maq:Maqu_1844"/>
<dbReference type="eggNOG" id="COG0215">
    <property type="taxonomic scope" value="Bacteria"/>
</dbReference>
<dbReference type="HOGENOM" id="CLU_013528_0_1_6"/>
<dbReference type="OrthoDB" id="9815130at2"/>
<dbReference type="Proteomes" id="UP000000998">
    <property type="component" value="Chromosome"/>
</dbReference>
<dbReference type="GO" id="GO:0005829">
    <property type="term" value="C:cytosol"/>
    <property type="evidence" value="ECO:0007669"/>
    <property type="project" value="TreeGrafter"/>
</dbReference>
<dbReference type="GO" id="GO:0005524">
    <property type="term" value="F:ATP binding"/>
    <property type="evidence" value="ECO:0007669"/>
    <property type="project" value="UniProtKB-UniRule"/>
</dbReference>
<dbReference type="GO" id="GO:0004817">
    <property type="term" value="F:cysteine-tRNA ligase activity"/>
    <property type="evidence" value="ECO:0007669"/>
    <property type="project" value="UniProtKB-UniRule"/>
</dbReference>
<dbReference type="GO" id="GO:0008270">
    <property type="term" value="F:zinc ion binding"/>
    <property type="evidence" value="ECO:0007669"/>
    <property type="project" value="UniProtKB-UniRule"/>
</dbReference>
<dbReference type="GO" id="GO:0006423">
    <property type="term" value="P:cysteinyl-tRNA aminoacylation"/>
    <property type="evidence" value="ECO:0007669"/>
    <property type="project" value="UniProtKB-UniRule"/>
</dbReference>
<dbReference type="CDD" id="cd07963">
    <property type="entry name" value="Anticodon_Ia_Cys"/>
    <property type="match status" value="1"/>
</dbReference>
<dbReference type="CDD" id="cd00672">
    <property type="entry name" value="CysRS_core"/>
    <property type="match status" value="1"/>
</dbReference>
<dbReference type="FunFam" id="3.40.50.620:FF:000009">
    <property type="entry name" value="Cysteine--tRNA ligase"/>
    <property type="match status" value="1"/>
</dbReference>
<dbReference type="Gene3D" id="1.20.120.1910">
    <property type="entry name" value="Cysteine-tRNA ligase, C-terminal anti-codon recognition domain"/>
    <property type="match status" value="1"/>
</dbReference>
<dbReference type="Gene3D" id="3.40.50.620">
    <property type="entry name" value="HUPs"/>
    <property type="match status" value="1"/>
</dbReference>
<dbReference type="HAMAP" id="MF_00041">
    <property type="entry name" value="Cys_tRNA_synth"/>
    <property type="match status" value="1"/>
</dbReference>
<dbReference type="InterPro" id="IPR015803">
    <property type="entry name" value="Cys-tRNA-ligase"/>
</dbReference>
<dbReference type="InterPro" id="IPR015273">
    <property type="entry name" value="Cys-tRNA-synt_Ia_DALR"/>
</dbReference>
<dbReference type="InterPro" id="IPR024909">
    <property type="entry name" value="Cys-tRNA/MSH_ligase"/>
</dbReference>
<dbReference type="InterPro" id="IPR056411">
    <property type="entry name" value="CysS_C"/>
</dbReference>
<dbReference type="InterPro" id="IPR014729">
    <property type="entry name" value="Rossmann-like_a/b/a_fold"/>
</dbReference>
<dbReference type="InterPro" id="IPR032678">
    <property type="entry name" value="tRNA-synt_1_cat_dom"/>
</dbReference>
<dbReference type="InterPro" id="IPR009080">
    <property type="entry name" value="tRNAsynth_Ia_anticodon-bd"/>
</dbReference>
<dbReference type="NCBIfam" id="TIGR00435">
    <property type="entry name" value="cysS"/>
    <property type="match status" value="1"/>
</dbReference>
<dbReference type="PANTHER" id="PTHR10890:SF3">
    <property type="entry name" value="CYSTEINE--TRNA LIGASE, CYTOPLASMIC"/>
    <property type="match status" value="1"/>
</dbReference>
<dbReference type="PANTHER" id="PTHR10890">
    <property type="entry name" value="CYSTEINYL-TRNA SYNTHETASE"/>
    <property type="match status" value="1"/>
</dbReference>
<dbReference type="Pfam" id="PF23493">
    <property type="entry name" value="CysS_C"/>
    <property type="match status" value="1"/>
</dbReference>
<dbReference type="Pfam" id="PF09190">
    <property type="entry name" value="DALR_2"/>
    <property type="match status" value="1"/>
</dbReference>
<dbReference type="Pfam" id="PF01406">
    <property type="entry name" value="tRNA-synt_1e"/>
    <property type="match status" value="1"/>
</dbReference>
<dbReference type="PRINTS" id="PR00983">
    <property type="entry name" value="TRNASYNTHCYS"/>
</dbReference>
<dbReference type="SMART" id="SM00840">
    <property type="entry name" value="DALR_2"/>
    <property type="match status" value="1"/>
</dbReference>
<dbReference type="SUPFAM" id="SSF47323">
    <property type="entry name" value="Anticodon-binding domain of a subclass of class I aminoacyl-tRNA synthetases"/>
    <property type="match status" value="1"/>
</dbReference>
<dbReference type="SUPFAM" id="SSF52374">
    <property type="entry name" value="Nucleotidylyl transferase"/>
    <property type="match status" value="1"/>
</dbReference>
<keyword id="KW-0030">Aminoacyl-tRNA synthetase</keyword>
<keyword id="KW-0067">ATP-binding</keyword>
<keyword id="KW-0963">Cytoplasm</keyword>
<keyword id="KW-0436">Ligase</keyword>
<keyword id="KW-0479">Metal-binding</keyword>
<keyword id="KW-0547">Nucleotide-binding</keyword>
<keyword id="KW-0648">Protein biosynthesis</keyword>
<keyword id="KW-0862">Zinc</keyword>
<comment type="catalytic activity">
    <reaction evidence="1">
        <text>tRNA(Cys) + L-cysteine + ATP = L-cysteinyl-tRNA(Cys) + AMP + diphosphate</text>
        <dbReference type="Rhea" id="RHEA:17773"/>
        <dbReference type="Rhea" id="RHEA-COMP:9661"/>
        <dbReference type="Rhea" id="RHEA-COMP:9679"/>
        <dbReference type="ChEBI" id="CHEBI:30616"/>
        <dbReference type="ChEBI" id="CHEBI:33019"/>
        <dbReference type="ChEBI" id="CHEBI:35235"/>
        <dbReference type="ChEBI" id="CHEBI:78442"/>
        <dbReference type="ChEBI" id="CHEBI:78517"/>
        <dbReference type="ChEBI" id="CHEBI:456215"/>
        <dbReference type="EC" id="6.1.1.16"/>
    </reaction>
</comment>
<comment type="cofactor">
    <cofactor evidence="1">
        <name>Zn(2+)</name>
        <dbReference type="ChEBI" id="CHEBI:29105"/>
    </cofactor>
    <text evidence="1">Binds 1 zinc ion per subunit.</text>
</comment>
<comment type="subunit">
    <text evidence="1">Monomer.</text>
</comment>
<comment type="subcellular location">
    <subcellularLocation>
        <location evidence="1">Cytoplasm</location>
    </subcellularLocation>
</comment>
<comment type="similarity">
    <text evidence="1">Belongs to the class-I aminoacyl-tRNA synthetase family.</text>
</comment>
<protein>
    <recommendedName>
        <fullName evidence="1">Cysteine--tRNA ligase</fullName>
        <ecNumber evidence="1">6.1.1.16</ecNumber>
    </recommendedName>
    <alternativeName>
        <fullName evidence="1">Cysteinyl-tRNA synthetase</fullName>
        <shortName evidence="1">CysRS</shortName>
    </alternativeName>
</protein>
<name>SYC_MARN8</name>
<gene>
    <name evidence="1" type="primary">cysS</name>
    <name type="ordered locus">Maqu_1844</name>
</gene>
<sequence length="463" mass="52099">MRIYNTLTQQKEAFKTLEPGKVRMYVCGMTVYDYCHLGHARVLVAFDVVTRYLRHRGYDVHYVRNITDIDDKILRRADENGEVYTDLTDRMIRAMHEDEAKLGVLSPNEEPRATAFIDDIIAMIQKLIAGGHAYAADNGDVYFAVESFPDYGKLSKKKLEDLVAGARVDVQEAKRSPADFALWKAAKPGEVSWQSPWGEGRPGWHIECSAMSTKCLGDTFDIHGGGPDLLFPHHENEIAQSECATGHTFVHTWMHAGAIRVNKEKMSKSLGNFFTIREILEKYPAEVVRYFLVSSHYRSQVDYSEDNLAEAGRTLTKLYHALRGIVPAKEADVAETDHDRRFAEVMDDDFNTAGAIAVLHAVANDINHYRREGDEEAAKRSAAVLVRLGAVLGLLQQNPEAFFQADTGSELTAEDIEAMIQARADARKAKDFAEADRIRDDLLEKGIILDDSREGTTWRRSQD</sequence>